<reference key="1">
    <citation type="journal article" date="2009" name="J. Bacteriol.">
        <title>Complete genome sequence and comparative genome analysis of enteropathogenic Escherichia coli O127:H6 strain E2348/69.</title>
        <authorList>
            <person name="Iguchi A."/>
            <person name="Thomson N.R."/>
            <person name="Ogura Y."/>
            <person name="Saunders D."/>
            <person name="Ooka T."/>
            <person name="Henderson I.R."/>
            <person name="Harris D."/>
            <person name="Asadulghani M."/>
            <person name="Kurokawa K."/>
            <person name="Dean P."/>
            <person name="Kenny B."/>
            <person name="Quail M.A."/>
            <person name="Thurston S."/>
            <person name="Dougan G."/>
            <person name="Hayashi T."/>
            <person name="Parkhill J."/>
            <person name="Frankel G."/>
        </authorList>
    </citation>
    <scope>NUCLEOTIDE SEQUENCE [LARGE SCALE GENOMIC DNA]</scope>
    <source>
        <strain>E2348/69 / EPEC</strain>
    </source>
</reference>
<sequence length="213" mass="22934">MAKNYYDITLALAGICQSARLVQQLAHQGHCDGDALHVSLNSIIDMNPSSTLAVFGGSEANLRVGLETLLGVLNASSRQGLNAELTRYTLSLMVLERKLSSAKGALDTLGNRINGLQRQLEHFDLQSETLMSAMAAIYVDVISPLGPRIQVTGSPAVLQSPQVQAKVRATLLAGIRAAVLWHQVGGGRLQLMFSRNRLTTQAKQILAHLTPEL</sequence>
<comment type="function">
    <text evidence="1">Negative regulator of phage lambda lysogenization. Contributes to the degradation of the phage regulatory protein CII. Acts probably by holding CII on the membrane surface, away from the target promoters, but close to the FtsH protease.</text>
</comment>
<comment type="subunit">
    <text evidence="1">Interacts with CII protein from phage lambda.</text>
</comment>
<comment type="subcellular location">
    <subcellularLocation>
        <location>Cytoplasm</location>
    </subcellularLocation>
    <subcellularLocation>
        <location evidence="1">Cell inner membrane</location>
        <topology evidence="1">Peripheral membrane protein</topology>
        <orientation evidence="1">Cytoplasmic side</orientation>
    </subcellularLocation>
</comment>
<comment type="similarity">
    <text evidence="1">Belongs to the HflD family.</text>
</comment>
<feature type="chain" id="PRO_1000200469" description="High frequency lysogenization protein HflD">
    <location>
        <begin position="1"/>
        <end position="213"/>
    </location>
</feature>
<feature type="coiled-coil region" evidence="1">
    <location>
        <begin position="79"/>
        <end position="126"/>
    </location>
</feature>
<dbReference type="EMBL" id="FM180568">
    <property type="protein sequence ID" value="CAS08821.1"/>
    <property type="molecule type" value="Genomic_DNA"/>
</dbReference>
<dbReference type="RefSeq" id="WP_001295971.1">
    <property type="nucleotide sequence ID" value="NC_011601.1"/>
</dbReference>
<dbReference type="SMR" id="B7UQ41"/>
<dbReference type="KEGG" id="ecg:E2348C_1273"/>
<dbReference type="HOGENOM" id="CLU_098920_0_0_6"/>
<dbReference type="Proteomes" id="UP000008205">
    <property type="component" value="Chromosome"/>
</dbReference>
<dbReference type="GO" id="GO:0005737">
    <property type="term" value="C:cytoplasm"/>
    <property type="evidence" value="ECO:0007669"/>
    <property type="project" value="UniProtKB-SubCell"/>
</dbReference>
<dbReference type="GO" id="GO:0005886">
    <property type="term" value="C:plasma membrane"/>
    <property type="evidence" value="ECO:0007669"/>
    <property type="project" value="UniProtKB-SubCell"/>
</dbReference>
<dbReference type="FunFam" id="1.10.3890.10:FF:000001">
    <property type="entry name" value="High frequency lysogenization protein HflD homolog"/>
    <property type="match status" value="1"/>
</dbReference>
<dbReference type="Gene3D" id="1.10.3890.10">
    <property type="entry name" value="HflD-like"/>
    <property type="match status" value="1"/>
</dbReference>
<dbReference type="HAMAP" id="MF_00695">
    <property type="entry name" value="HflD_protein"/>
    <property type="match status" value="1"/>
</dbReference>
<dbReference type="InterPro" id="IPR007451">
    <property type="entry name" value="HflD"/>
</dbReference>
<dbReference type="InterPro" id="IPR035932">
    <property type="entry name" value="HflD-like_sf"/>
</dbReference>
<dbReference type="NCBIfam" id="NF001245">
    <property type="entry name" value="PRK00218.1-1"/>
    <property type="match status" value="1"/>
</dbReference>
<dbReference type="NCBIfam" id="NF001246">
    <property type="entry name" value="PRK00218.1-2"/>
    <property type="match status" value="1"/>
</dbReference>
<dbReference type="NCBIfam" id="NF001248">
    <property type="entry name" value="PRK00218.1-4"/>
    <property type="match status" value="1"/>
</dbReference>
<dbReference type="NCBIfam" id="NF001249">
    <property type="entry name" value="PRK00218.1-5"/>
    <property type="match status" value="1"/>
</dbReference>
<dbReference type="PANTHER" id="PTHR38100">
    <property type="entry name" value="HIGH FREQUENCY LYSOGENIZATION PROTEIN HFLD"/>
    <property type="match status" value="1"/>
</dbReference>
<dbReference type="PANTHER" id="PTHR38100:SF1">
    <property type="entry name" value="HIGH FREQUENCY LYSOGENIZATION PROTEIN HFLD"/>
    <property type="match status" value="1"/>
</dbReference>
<dbReference type="Pfam" id="PF04356">
    <property type="entry name" value="DUF489"/>
    <property type="match status" value="1"/>
</dbReference>
<dbReference type="SUPFAM" id="SSF101322">
    <property type="entry name" value="YcfC-like"/>
    <property type="match status" value="1"/>
</dbReference>
<organism>
    <name type="scientific">Escherichia coli O127:H6 (strain E2348/69 / EPEC)</name>
    <dbReference type="NCBI Taxonomy" id="574521"/>
    <lineage>
        <taxon>Bacteria</taxon>
        <taxon>Pseudomonadati</taxon>
        <taxon>Pseudomonadota</taxon>
        <taxon>Gammaproteobacteria</taxon>
        <taxon>Enterobacterales</taxon>
        <taxon>Enterobacteriaceae</taxon>
        <taxon>Escherichia</taxon>
    </lineage>
</organism>
<protein>
    <recommendedName>
        <fullName evidence="1">High frequency lysogenization protein HflD</fullName>
    </recommendedName>
</protein>
<gene>
    <name evidence="1" type="primary">hflD</name>
    <name type="ordered locus">E2348C_1273</name>
</gene>
<name>HFLD_ECO27</name>
<evidence type="ECO:0000255" key="1">
    <source>
        <dbReference type="HAMAP-Rule" id="MF_00695"/>
    </source>
</evidence>
<proteinExistence type="inferred from homology"/>
<keyword id="KW-0997">Cell inner membrane</keyword>
<keyword id="KW-1003">Cell membrane</keyword>
<keyword id="KW-0175">Coiled coil</keyword>
<keyword id="KW-0963">Cytoplasm</keyword>
<keyword id="KW-0472">Membrane</keyword>
<keyword id="KW-1185">Reference proteome</keyword>
<accession>B7UQ41</accession>